<name>RSXG_SALTY</name>
<reference key="1">
    <citation type="journal article" date="2001" name="Nature">
        <title>Complete genome sequence of Salmonella enterica serovar Typhimurium LT2.</title>
        <authorList>
            <person name="McClelland M."/>
            <person name="Sanderson K.E."/>
            <person name="Spieth J."/>
            <person name="Clifton S.W."/>
            <person name="Latreille P."/>
            <person name="Courtney L."/>
            <person name="Porwollik S."/>
            <person name="Ali J."/>
            <person name="Dante M."/>
            <person name="Du F."/>
            <person name="Hou S."/>
            <person name="Layman D."/>
            <person name="Leonard S."/>
            <person name="Nguyen C."/>
            <person name="Scott K."/>
            <person name="Holmes A."/>
            <person name="Grewal N."/>
            <person name="Mulvaney E."/>
            <person name="Ryan E."/>
            <person name="Sun H."/>
            <person name="Florea L."/>
            <person name="Miller W."/>
            <person name="Stoneking T."/>
            <person name="Nhan M."/>
            <person name="Waterston R."/>
            <person name="Wilson R.K."/>
        </authorList>
    </citation>
    <scope>NUCLEOTIDE SEQUENCE [LARGE SCALE GENOMIC DNA]</scope>
    <source>
        <strain>LT2 / SGSC1412 / ATCC 700720</strain>
    </source>
</reference>
<dbReference type="EC" id="7.-.-.-" evidence="1"/>
<dbReference type="EMBL" id="AE006468">
    <property type="protein sequence ID" value="AAL20377.1"/>
    <property type="molecule type" value="Genomic_DNA"/>
</dbReference>
<dbReference type="RefSeq" id="WP_000920822.1">
    <property type="nucleotide sequence ID" value="NC_003197.2"/>
</dbReference>
<dbReference type="SMR" id="Q8ZPM4"/>
<dbReference type="STRING" id="99287.STM1455"/>
<dbReference type="PaxDb" id="99287-STM1455"/>
<dbReference type="DNASU" id="1252973"/>
<dbReference type="KEGG" id="stm:STM1455"/>
<dbReference type="PATRIC" id="fig|99287.12.peg.1538"/>
<dbReference type="HOGENOM" id="CLU_077882_1_0_6"/>
<dbReference type="OMA" id="YSGAIHL"/>
<dbReference type="PhylomeDB" id="Q8ZPM4"/>
<dbReference type="BioCyc" id="SENT99287:STM1455-MONOMER"/>
<dbReference type="Proteomes" id="UP000001014">
    <property type="component" value="Chromosome"/>
</dbReference>
<dbReference type="GO" id="GO:1990204">
    <property type="term" value="C:oxidoreductase complex"/>
    <property type="evidence" value="ECO:0000318"/>
    <property type="project" value="GO_Central"/>
</dbReference>
<dbReference type="GO" id="GO:0005886">
    <property type="term" value="C:plasma membrane"/>
    <property type="evidence" value="ECO:0000318"/>
    <property type="project" value="GO_Central"/>
</dbReference>
<dbReference type="GO" id="GO:0009055">
    <property type="term" value="F:electron transfer activity"/>
    <property type="evidence" value="ECO:0007669"/>
    <property type="project" value="InterPro"/>
</dbReference>
<dbReference type="GO" id="GO:0010181">
    <property type="term" value="F:FMN binding"/>
    <property type="evidence" value="ECO:0007669"/>
    <property type="project" value="InterPro"/>
</dbReference>
<dbReference type="GO" id="GO:0016651">
    <property type="term" value="F:oxidoreductase activity, acting on NAD(P)H"/>
    <property type="evidence" value="ECO:0000318"/>
    <property type="project" value="GO_Central"/>
</dbReference>
<dbReference type="GO" id="GO:0022900">
    <property type="term" value="P:electron transport chain"/>
    <property type="evidence" value="ECO:0007669"/>
    <property type="project" value="UniProtKB-UniRule"/>
</dbReference>
<dbReference type="HAMAP" id="MF_00479">
    <property type="entry name" value="RsxG_RnfG"/>
    <property type="match status" value="1"/>
</dbReference>
<dbReference type="InterPro" id="IPR007329">
    <property type="entry name" value="FMN-bd"/>
</dbReference>
<dbReference type="InterPro" id="IPR010209">
    <property type="entry name" value="Ion_transpt_RnfG/RsxG"/>
</dbReference>
<dbReference type="NCBIfam" id="NF002519">
    <property type="entry name" value="PRK01908.1"/>
    <property type="match status" value="1"/>
</dbReference>
<dbReference type="NCBIfam" id="TIGR01947">
    <property type="entry name" value="rnfG"/>
    <property type="match status" value="1"/>
</dbReference>
<dbReference type="PANTHER" id="PTHR36118">
    <property type="entry name" value="ION-TRANSLOCATING OXIDOREDUCTASE COMPLEX SUBUNIT G"/>
    <property type="match status" value="1"/>
</dbReference>
<dbReference type="PANTHER" id="PTHR36118:SF1">
    <property type="entry name" value="ION-TRANSLOCATING OXIDOREDUCTASE COMPLEX SUBUNIT G"/>
    <property type="match status" value="1"/>
</dbReference>
<dbReference type="Pfam" id="PF04205">
    <property type="entry name" value="FMN_bind"/>
    <property type="match status" value="1"/>
</dbReference>
<dbReference type="PIRSF" id="PIRSF006091">
    <property type="entry name" value="E_trnsport_RnfG"/>
    <property type="match status" value="1"/>
</dbReference>
<dbReference type="SMART" id="SM00900">
    <property type="entry name" value="FMN_bind"/>
    <property type="match status" value="1"/>
</dbReference>
<comment type="function">
    <text evidence="1">Part of a membrane-bound complex that couples electron transfer with translocation of ions across the membrane. Required to maintain the reduced state of SoxR.</text>
</comment>
<comment type="cofactor">
    <cofactor evidence="1">
        <name>FMN</name>
        <dbReference type="ChEBI" id="CHEBI:58210"/>
    </cofactor>
</comment>
<comment type="subunit">
    <text evidence="1">The complex is composed of six subunits: RsxA, RsxB, RsxC, RsxD, RsxE and RsxG.</text>
</comment>
<comment type="subcellular location">
    <subcellularLocation>
        <location evidence="1">Cell inner membrane</location>
        <topology evidence="1">Single-pass membrane protein</topology>
    </subcellularLocation>
</comment>
<comment type="similarity">
    <text evidence="1">Belongs to the RnfG family.</text>
</comment>
<proteinExistence type="inferred from homology"/>
<feature type="chain" id="PRO_0000214641" description="Ion-translocating oxidoreductase complex subunit G">
    <location>
        <begin position="1"/>
        <end position="206"/>
    </location>
</feature>
<feature type="transmembrane region" description="Helical" evidence="1">
    <location>
        <begin position="9"/>
        <end position="29"/>
    </location>
</feature>
<feature type="modified residue" description="FMN phosphoryl threonine" evidence="1">
    <location>
        <position position="174"/>
    </location>
</feature>
<sequence length="206" mass="22238">MLKTIRKHGITLALFAAGSTGLTAVINQMTKSTIHEQALQQQHALFDQVLPPDRYNNNLQESCYLVDAPALGKGTHRVFIARKDDKPVAAIIEATAPDGYSGAIQLIVGADFNGTVLGTRVTEHHETPGLGDKIERRLSDWITHFSGKTISGENDTHWAVKKDGGDFDQFTGATITPRAVVNAVKRAGLYAESLPAQLPHLTACGE</sequence>
<protein>
    <recommendedName>
        <fullName evidence="1">Ion-translocating oxidoreductase complex subunit G</fullName>
        <ecNumber evidence="1">7.-.-.-</ecNumber>
    </recommendedName>
    <alternativeName>
        <fullName evidence="1">Rsx electron transport complex subunit G</fullName>
    </alternativeName>
</protein>
<accession>Q8ZPM4</accession>
<evidence type="ECO:0000255" key="1">
    <source>
        <dbReference type="HAMAP-Rule" id="MF_00479"/>
    </source>
</evidence>
<gene>
    <name evidence="1" type="primary">rsxG</name>
    <name type="ordered locus">STM1455</name>
</gene>
<keyword id="KW-0997">Cell inner membrane</keyword>
<keyword id="KW-1003">Cell membrane</keyword>
<keyword id="KW-0249">Electron transport</keyword>
<keyword id="KW-0285">Flavoprotein</keyword>
<keyword id="KW-0288">FMN</keyword>
<keyword id="KW-0472">Membrane</keyword>
<keyword id="KW-0597">Phosphoprotein</keyword>
<keyword id="KW-1185">Reference proteome</keyword>
<keyword id="KW-1278">Translocase</keyword>
<keyword id="KW-0812">Transmembrane</keyword>
<keyword id="KW-1133">Transmembrane helix</keyword>
<keyword id="KW-0813">Transport</keyword>
<organism>
    <name type="scientific">Salmonella typhimurium (strain LT2 / SGSC1412 / ATCC 700720)</name>
    <dbReference type="NCBI Taxonomy" id="99287"/>
    <lineage>
        <taxon>Bacteria</taxon>
        <taxon>Pseudomonadati</taxon>
        <taxon>Pseudomonadota</taxon>
        <taxon>Gammaproteobacteria</taxon>
        <taxon>Enterobacterales</taxon>
        <taxon>Enterobacteriaceae</taxon>
        <taxon>Salmonella</taxon>
    </lineage>
</organism>